<name>STB5_CANGA</name>
<gene>
    <name evidence="4" type="primary">STB5</name>
    <name type="ordered locus">CAGL0I02552g</name>
</gene>
<keyword id="KW-0238">DNA-binding</keyword>
<keyword id="KW-0479">Metal-binding</keyword>
<keyword id="KW-0539">Nucleus</keyword>
<keyword id="KW-1185">Reference proteome</keyword>
<keyword id="KW-0804">Transcription</keyword>
<keyword id="KW-0805">Transcription regulation</keyword>
<keyword id="KW-0862">Zinc</keyword>
<organism>
    <name type="scientific">Candida glabrata (strain ATCC 2001 / BCRC 20586 / JCM 3761 / NBRC 0622 / NRRL Y-65 / CBS 138)</name>
    <name type="common">Yeast</name>
    <name type="synonym">Nakaseomyces glabratus</name>
    <dbReference type="NCBI Taxonomy" id="284593"/>
    <lineage>
        <taxon>Eukaryota</taxon>
        <taxon>Fungi</taxon>
        <taxon>Dikarya</taxon>
        <taxon>Ascomycota</taxon>
        <taxon>Saccharomycotina</taxon>
        <taxon>Saccharomycetes</taxon>
        <taxon>Saccharomycetales</taxon>
        <taxon>Saccharomycetaceae</taxon>
        <taxon>Nakaseomyces</taxon>
    </lineage>
</organism>
<accession>Q6FQY1</accession>
<reference key="1">
    <citation type="journal article" date="2004" name="Nature">
        <title>Genome evolution in yeasts.</title>
        <authorList>
            <person name="Dujon B."/>
            <person name="Sherman D."/>
            <person name="Fischer G."/>
            <person name="Durrens P."/>
            <person name="Casaregola S."/>
            <person name="Lafontaine I."/>
            <person name="de Montigny J."/>
            <person name="Marck C."/>
            <person name="Neuveglise C."/>
            <person name="Talla E."/>
            <person name="Goffard N."/>
            <person name="Frangeul L."/>
            <person name="Aigle M."/>
            <person name="Anthouard V."/>
            <person name="Babour A."/>
            <person name="Barbe V."/>
            <person name="Barnay S."/>
            <person name="Blanchin S."/>
            <person name="Beckerich J.-M."/>
            <person name="Beyne E."/>
            <person name="Bleykasten C."/>
            <person name="Boisrame A."/>
            <person name="Boyer J."/>
            <person name="Cattolico L."/>
            <person name="Confanioleri F."/>
            <person name="de Daruvar A."/>
            <person name="Despons L."/>
            <person name="Fabre E."/>
            <person name="Fairhead C."/>
            <person name="Ferry-Dumazet H."/>
            <person name="Groppi A."/>
            <person name="Hantraye F."/>
            <person name="Hennequin C."/>
            <person name="Jauniaux N."/>
            <person name="Joyet P."/>
            <person name="Kachouri R."/>
            <person name="Kerrest A."/>
            <person name="Koszul R."/>
            <person name="Lemaire M."/>
            <person name="Lesur I."/>
            <person name="Ma L."/>
            <person name="Muller H."/>
            <person name="Nicaud J.-M."/>
            <person name="Nikolski M."/>
            <person name="Oztas S."/>
            <person name="Ozier-Kalogeropoulos O."/>
            <person name="Pellenz S."/>
            <person name="Potier S."/>
            <person name="Richard G.-F."/>
            <person name="Straub M.-L."/>
            <person name="Suleau A."/>
            <person name="Swennen D."/>
            <person name="Tekaia F."/>
            <person name="Wesolowski-Louvel M."/>
            <person name="Westhof E."/>
            <person name="Wirth B."/>
            <person name="Zeniou-Meyer M."/>
            <person name="Zivanovic Y."/>
            <person name="Bolotin-Fukuhara M."/>
            <person name="Thierry A."/>
            <person name="Bouchier C."/>
            <person name="Caudron B."/>
            <person name="Scarpelli C."/>
            <person name="Gaillardin C."/>
            <person name="Weissenbach J."/>
            <person name="Wincker P."/>
            <person name="Souciet J.-L."/>
        </authorList>
    </citation>
    <scope>NUCLEOTIDE SEQUENCE [LARGE SCALE GENOMIC DNA]</scope>
    <source>
        <strain>ATCC 2001 / BCRC 20586 / JCM 3761 / NBRC 0622 / NRRL Y-65 / CBS 138</strain>
    </source>
</reference>
<reference key="2">
    <citation type="journal article" date="2013" name="Antimicrob. Agents Chemother.">
        <title>STB5 is a negative regulator of azole resistance in Candida glabrata.</title>
        <authorList>
            <person name="Noble J.A."/>
            <person name="Tsai H.F."/>
            <person name="Suffis S.D."/>
            <person name="Su Q."/>
            <person name="Myers T.G."/>
            <person name="Bennett J.E."/>
        </authorList>
    </citation>
    <scope>FUNCTION</scope>
    <scope>DISRUPTION PHENOTYPE</scope>
</reference>
<comment type="function">
    <text evidence="3">Transcription factor that negatively regulates pleiotropic drug resistance genes, including the ABC transporter genes CDR1, PDH1, and YOR1.</text>
</comment>
<comment type="subcellular location">
    <subcellularLocation>
        <location evidence="1">Nucleus</location>
    </subcellularLocation>
</comment>
<comment type="disruption phenotype">
    <text evidence="3">Causes a modest increase in azole resistance but does not exhibit altered susceptibility to cycloheximide or caffeine.</text>
</comment>
<feature type="chain" id="PRO_0000445082" description="Negative regulator of pleiotropic drug resistance STB5">
    <location>
        <begin position="1"/>
        <end position="1005"/>
    </location>
</feature>
<feature type="DNA-binding region" description="Zn(2)-C6 fungal-type" evidence="1">
    <location>
        <begin position="32"/>
        <end position="59"/>
    </location>
</feature>
<feature type="region of interest" description="Disordered" evidence="2">
    <location>
        <begin position="1"/>
        <end position="28"/>
    </location>
</feature>
<feature type="region of interest" description="Disordered" evidence="2">
    <location>
        <begin position="129"/>
        <end position="151"/>
    </location>
</feature>
<feature type="region of interest" description="Disordered" evidence="2">
    <location>
        <begin position="666"/>
        <end position="693"/>
    </location>
</feature>
<feature type="region of interest" description="Disordered" evidence="2">
    <location>
        <begin position="763"/>
        <end position="831"/>
    </location>
</feature>
<feature type="compositionally biased region" description="Basic and acidic residues" evidence="2">
    <location>
        <begin position="673"/>
        <end position="693"/>
    </location>
</feature>
<feature type="compositionally biased region" description="Polar residues" evidence="2">
    <location>
        <begin position="763"/>
        <end position="773"/>
    </location>
</feature>
<feature type="compositionally biased region" description="Basic and acidic residues" evidence="2">
    <location>
        <begin position="792"/>
        <end position="801"/>
    </location>
</feature>
<sequence>MSGPDKGSDSGQTANDPKQKKARNGQMETYSCARCRKLKKKCPRQLPECSNCLKAREPCNYPGRAPRRTKKELRDAIMKGEVLPSMRRKHRKIEKELKTADLRHLESVDDRPVNQVMGGSMPPLGAYRGGEQQYNNGPPISGIDGNDSINRGKAQSVGSYQILPPQRKSKLVLDQNPKFVHSQSSALKTNEYPVPIMSPHIANQVYPEGVSSLISALNTMNDNVSANTPIALSYLQLQKLHQEQQQIQQQQIQQQQQHQHLVQQHLQHVRADATSILPPVTSQTVYTPIPGPRTSQIPFGFTHGYTASAPPPLMQPYSMPTSPFESREKQQQFDNIQYHPVYKIPPIAARQSPIDEIIGIENGSISIDAGSITREVVNSRMKGPHSTSWVNEDGSPKPIKKSLLEKFVSAYFEHNHRLFPMVDKVTFLKKLATINSFESIEMLAVNNPELPKTFIFEIYMIMAIGCTTLQRAGKLTTDEGHLYEHLAYLAMRNFRDILHQQDITTLRCLILLGIYSFFEPKGVSSWTISGIAMRLAIELGLNRPLTAKEMGDMSAVEVESRYRVFWSAYCFERVVATSLGRVSAIDDEDIGIPLPRALYDSEKEDIEVTNLIISLRKMGGKIYKEVHSLSAGRKDITMEQKQLIIQKLRKELDDIYEEECEKRRLKGKSRSSKRFEKSKESDSDRGVTEEDVKSGNENLIGLLASDDVSMTEHGQSIDNTLESTPLPTTIPTTIVNDSVDQHSTLENIPTSATSKDQIETIITKPTANIMNDQTDSDPLPKVDNKPISNNEEGPKSLKEGNSEQNPSENISPEDVTLTKTDNSENKESSLRSNSNISFHISNVWLEMRYTQLQILLYRPSALIPKPPIESLTVLGEFCLAAWRHTYTLYKEKLLPLNWITLFRTLTICNTILYCLCQWSIDLVASTIEIQQCVEILQHFGEKWVFAMKCADVFQNISNTIVEISLSQGQDPNIDKLTRELFGASNAYLEILNENNVDVSWEDRFR</sequence>
<proteinExistence type="inferred from homology"/>
<protein>
    <recommendedName>
        <fullName evidence="4">Negative regulator of pleiotropic drug resistance STB5</fullName>
    </recommendedName>
</protein>
<dbReference type="EMBL" id="CR380955">
    <property type="protein sequence ID" value="CAG60300.1"/>
    <property type="molecule type" value="Genomic_DNA"/>
</dbReference>
<dbReference type="RefSeq" id="XP_447363.1">
    <property type="nucleotide sequence ID" value="XM_447363.1"/>
</dbReference>
<dbReference type="SMR" id="Q6FQY1"/>
<dbReference type="FunCoup" id="Q6FQY1">
    <property type="interactions" value="1087"/>
</dbReference>
<dbReference type="STRING" id="284593.Q6FQY1"/>
<dbReference type="EnsemblFungi" id="CAGL0I02552g-T">
    <property type="protein sequence ID" value="CAGL0I02552g-T-p1"/>
    <property type="gene ID" value="CAGL0I02552g"/>
</dbReference>
<dbReference type="GeneID" id="2888916"/>
<dbReference type="KEGG" id="cgr:2888916"/>
<dbReference type="CGD" id="CAL0132714">
    <property type="gene designation" value="STB5"/>
</dbReference>
<dbReference type="VEuPathDB" id="FungiDB:CAGL0I02552g"/>
<dbReference type="eggNOG" id="ENOG502QTEH">
    <property type="taxonomic scope" value="Eukaryota"/>
</dbReference>
<dbReference type="HOGENOM" id="CLU_011881_0_0_1"/>
<dbReference type="InParanoid" id="Q6FQY1"/>
<dbReference type="OMA" id="TSWEIMG"/>
<dbReference type="Proteomes" id="UP000002428">
    <property type="component" value="Chromosome I"/>
</dbReference>
<dbReference type="GO" id="GO:0005634">
    <property type="term" value="C:nucleus"/>
    <property type="evidence" value="ECO:0007669"/>
    <property type="project" value="UniProtKB-SubCell"/>
</dbReference>
<dbReference type="GO" id="GO:0000981">
    <property type="term" value="F:DNA-binding transcription factor activity, RNA polymerase II-specific"/>
    <property type="evidence" value="ECO:0007669"/>
    <property type="project" value="InterPro"/>
</dbReference>
<dbReference type="GO" id="GO:0043565">
    <property type="term" value="F:sequence-specific DNA binding"/>
    <property type="evidence" value="ECO:0007669"/>
    <property type="project" value="TreeGrafter"/>
</dbReference>
<dbReference type="GO" id="GO:0008270">
    <property type="term" value="F:zinc ion binding"/>
    <property type="evidence" value="ECO:0007669"/>
    <property type="project" value="InterPro"/>
</dbReference>
<dbReference type="GO" id="GO:0034599">
    <property type="term" value="P:cellular response to oxidative stress"/>
    <property type="evidence" value="ECO:0007669"/>
    <property type="project" value="EnsemblFungi"/>
</dbReference>
<dbReference type="GO" id="GO:2001039">
    <property type="term" value="P:negative regulation of cellular response to drug"/>
    <property type="evidence" value="ECO:0000315"/>
    <property type="project" value="CGD"/>
</dbReference>
<dbReference type="GO" id="GO:0000122">
    <property type="term" value="P:negative regulation of transcription by RNA polymerase II"/>
    <property type="evidence" value="ECO:0000315"/>
    <property type="project" value="CGD"/>
</dbReference>
<dbReference type="GO" id="GO:0045944">
    <property type="term" value="P:positive regulation of transcription by RNA polymerase II"/>
    <property type="evidence" value="ECO:0007669"/>
    <property type="project" value="TreeGrafter"/>
</dbReference>
<dbReference type="GO" id="GO:0006368">
    <property type="term" value="P:transcription elongation by RNA polymerase II"/>
    <property type="evidence" value="ECO:0007669"/>
    <property type="project" value="EnsemblFungi"/>
</dbReference>
<dbReference type="CDD" id="cd12148">
    <property type="entry name" value="fungal_TF_MHR"/>
    <property type="match status" value="1"/>
</dbReference>
<dbReference type="CDD" id="cd00067">
    <property type="entry name" value="GAL4"/>
    <property type="match status" value="1"/>
</dbReference>
<dbReference type="Gene3D" id="4.10.240.10">
    <property type="entry name" value="Zn(2)-C6 fungal-type DNA-binding domain"/>
    <property type="match status" value="1"/>
</dbReference>
<dbReference type="InterPro" id="IPR007219">
    <property type="entry name" value="Transcription_factor_dom_fun"/>
</dbReference>
<dbReference type="InterPro" id="IPR052202">
    <property type="entry name" value="Yeast_MetPath_Reg"/>
</dbReference>
<dbReference type="InterPro" id="IPR036864">
    <property type="entry name" value="Zn2-C6_fun-type_DNA-bd_sf"/>
</dbReference>
<dbReference type="InterPro" id="IPR001138">
    <property type="entry name" value="Zn2Cys6_DnaBD"/>
</dbReference>
<dbReference type="PANTHER" id="PTHR47782:SF7">
    <property type="entry name" value="PROTEIN STB5"/>
    <property type="match status" value="1"/>
</dbReference>
<dbReference type="PANTHER" id="PTHR47782">
    <property type="entry name" value="ZN(II)2CYS6 TRANSCRIPTION FACTOR (EUROFUNG)-RELATED"/>
    <property type="match status" value="1"/>
</dbReference>
<dbReference type="Pfam" id="PF04082">
    <property type="entry name" value="Fungal_trans"/>
    <property type="match status" value="1"/>
</dbReference>
<dbReference type="Pfam" id="PF00172">
    <property type="entry name" value="Zn_clus"/>
    <property type="match status" value="1"/>
</dbReference>
<dbReference type="SMART" id="SM00906">
    <property type="entry name" value="Fungal_trans"/>
    <property type="match status" value="1"/>
</dbReference>
<dbReference type="SMART" id="SM00066">
    <property type="entry name" value="GAL4"/>
    <property type="match status" value="1"/>
</dbReference>
<dbReference type="SUPFAM" id="SSF57701">
    <property type="entry name" value="Zn2/Cys6 DNA-binding domain"/>
    <property type="match status" value="1"/>
</dbReference>
<dbReference type="PROSITE" id="PS00463">
    <property type="entry name" value="ZN2_CY6_FUNGAL_1"/>
    <property type="match status" value="1"/>
</dbReference>
<dbReference type="PROSITE" id="PS50048">
    <property type="entry name" value="ZN2_CY6_FUNGAL_2"/>
    <property type="match status" value="1"/>
</dbReference>
<evidence type="ECO:0000255" key="1">
    <source>
        <dbReference type="PROSITE-ProRule" id="PRU00227"/>
    </source>
</evidence>
<evidence type="ECO:0000256" key="2">
    <source>
        <dbReference type="SAM" id="MobiDB-lite"/>
    </source>
</evidence>
<evidence type="ECO:0000269" key="3">
    <source>
    </source>
</evidence>
<evidence type="ECO:0000303" key="4">
    <source>
    </source>
</evidence>